<gene>
    <name evidence="1" type="primary">rplJ</name>
    <name type="ordered locus">Rfer_3594</name>
</gene>
<feature type="chain" id="PRO_1000005572" description="Large ribosomal subunit protein uL10">
    <location>
        <begin position="1"/>
        <end position="178"/>
    </location>
</feature>
<protein>
    <recommendedName>
        <fullName evidence="1">Large ribosomal subunit protein uL10</fullName>
    </recommendedName>
    <alternativeName>
        <fullName evidence="2">50S ribosomal protein L10</fullName>
    </alternativeName>
</protein>
<dbReference type="EMBL" id="CP000267">
    <property type="protein sequence ID" value="ABD71298.1"/>
    <property type="molecule type" value="Genomic_DNA"/>
</dbReference>
<dbReference type="RefSeq" id="WP_011465861.1">
    <property type="nucleotide sequence ID" value="NC_007908.1"/>
</dbReference>
<dbReference type="SMR" id="Q21SF5"/>
<dbReference type="STRING" id="338969.Rfer_3594"/>
<dbReference type="KEGG" id="rfr:Rfer_3594"/>
<dbReference type="eggNOG" id="COG0244">
    <property type="taxonomic scope" value="Bacteria"/>
</dbReference>
<dbReference type="HOGENOM" id="CLU_092227_0_0_4"/>
<dbReference type="OrthoDB" id="9808307at2"/>
<dbReference type="Proteomes" id="UP000008332">
    <property type="component" value="Chromosome"/>
</dbReference>
<dbReference type="GO" id="GO:0015934">
    <property type="term" value="C:large ribosomal subunit"/>
    <property type="evidence" value="ECO:0007669"/>
    <property type="project" value="InterPro"/>
</dbReference>
<dbReference type="GO" id="GO:0070180">
    <property type="term" value="F:large ribosomal subunit rRNA binding"/>
    <property type="evidence" value="ECO:0007669"/>
    <property type="project" value="UniProtKB-UniRule"/>
</dbReference>
<dbReference type="GO" id="GO:0003735">
    <property type="term" value="F:structural constituent of ribosome"/>
    <property type="evidence" value="ECO:0007669"/>
    <property type="project" value="InterPro"/>
</dbReference>
<dbReference type="GO" id="GO:0006412">
    <property type="term" value="P:translation"/>
    <property type="evidence" value="ECO:0007669"/>
    <property type="project" value="UniProtKB-UniRule"/>
</dbReference>
<dbReference type="CDD" id="cd05797">
    <property type="entry name" value="Ribosomal_L10"/>
    <property type="match status" value="1"/>
</dbReference>
<dbReference type="Gene3D" id="3.30.70.1730">
    <property type="match status" value="1"/>
</dbReference>
<dbReference type="Gene3D" id="6.10.250.290">
    <property type="match status" value="1"/>
</dbReference>
<dbReference type="HAMAP" id="MF_00362">
    <property type="entry name" value="Ribosomal_uL10"/>
    <property type="match status" value="1"/>
</dbReference>
<dbReference type="InterPro" id="IPR001790">
    <property type="entry name" value="Ribosomal_uL10"/>
</dbReference>
<dbReference type="InterPro" id="IPR043141">
    <property type="entry name" value="Ribosomal_uL10-like_sf"/>
</dbReference>
<dbReference type="InterPro" id="IPR022973">
    <property type="entry name" value="Ribosomal_uL10_bac"/>
</dbReference>
<dbReference type="InterPro" id="IPR047865">
    <property type="entry name" value="Ribosomal_uL10_bac_type"/>
</dbReference>
<dbReference type="InterPro" id="IPR002363">
    <property type="entry name" value="Ribosomal_uL10_CS_bac"/>
</dbReference>
<dbReference type="NCBIfam" id="NF000955">
    <property type="entry name" value="PRK00099.1-1"/>
    <property type="match status" value="1"/>
</dbReference>
<dbReference type="PANTHER" id="PTHR11560">
    <property type="entry name" value="39S RIBOSOMAL PROTEIN L10, MITOCHONDRIAL"/>
    <property type="match status" value="1"/>
</dbReference>
<dbReference type="Pfam" id="PF00466">
    <property type="entry name" value="Ribosomal_L10"/>
    <property type="match status" value="1"/>
</dbReference>
<dbReference type="SUPFAM" id="SSF160369">
    <property type="entry name" value="Ribosomal protein L10-like"/>
    <property type="match status" value="1"/>
</dbReference>
<dbReference type="PROSITE" id="PS01109">
    <property type="entry name" value="RIBOSOMAL_L10"/>
    <property type="match status" value="1"/>
</dbReference>
<keyword id="KW-1185">Reference proteome</keyword>
<keyword id="KW-0687">Ribonucleoprotein</keyword>
<keyword id="KW-0689">Ribosomal protein</keyword>
<keyword id="KW-0694">RNA-binding</keyword>
<keyword id="KW-0699">rRNA-binding</keyword>
<organism>
    <name type="scientific">Albidiferax ferrireducens (strain ATCC BAA-621 / DSM 15236 / T118)</name>
    <name type="common">Rhodoferax ferrireducens</name>
    <dbReference type="NCBI Taxonomy" id="338969"/>
    <lineage>
        <taxon>Bacteria</taxon>
        <taxon>Pseudomonadati</taxon>
        <taxon>Pseudomonadota</taxon>
        <taxon>Betaproteobacteria</taxon>
        <taxon>Burkholderiales</taxon>
        <taxon>Comamonadaceae</taxon>
        <taxon>Rhodoferax</taxon>
    </lineage>
</organism>
<reference key="1">
    <citation type="submission" date="2006-02" db="EMBL/GenBank/DDBJ databases">
        <title>Complete sequence of chromosome of Rhodoferax ferrireducens DSM 15236.</title>
        <authorList>
            <person name="Copeland A."/>
            <person name="Lucas S."/>
            <person name="Lapidus A."/>
            <person name="Barry K."/>
            <person name="Detter J.C."/>
            <person name="Glavina del Rio T."/>
            <person name="Hammon N."/>
            <person name="Israni S."/>
            <person name="Pitluck S."/>
            <person name="Brettin T."/>
            <person name="Bruce D."/>
            <person name="Han C."/>
            <person name="Tapia R."/>
            <person name="Gilna P."/>
            <person name="Kiss H."/>
            <person name="Schmutz J."/>
            <person name="Larimer F."/>
            <person name="Land M."/>
            <person name="Kyrpides N."/>
            <person name="Ivanova N."/>
            <person name="Richardson P."/>
        </authorList>
    </citation>
    <scope>NUCLEOTIDE SEQUENCE [LARGE SCALE GENOMIC DNA]</scope>
    <source>
        <strain>ATCC BAA-621 / DSM 15236 / T118</strain>
    </source>
</reference>
<name>RL10_ALBFT</name>
<proteinExistence type="inferred from homology"/>
<comment type="function">
    <text evidence="1">Forms part of the ribosomal stalk, playing a central role in the interaction of the ribosome with GTP-bound translation factors.</text>
</comment>
<comment type="subunit">
    <text evidence="1">Part of the ribosomal stalk of the 50S ribosomal subunit. The N-terminus interacts with L11 and the large rRNA to form the base of the stalk. The C-terminus forms an elongated spine to which L12 dimers bind in a sequential fashion forming a multimeric L10(L12)X complex.</text>
</comment>
<comment type="similarity">
    <text evidence="1">Belongs to the universal ribosomal protein uL10 family.</text>
</comment>
<evidence type="ECO:0000255" key="1">
    <source>
        <dbReference type="HAMAP-Rule" id="MF_00362"/>
    </source>
</evidence>
<evidence type="ECO:0000305" key="2"/>
<accession>Q21SF5</accession>
<sequence length="178" mass="18301">MSLNRSEKEAVISDVTGLAAKAQTLVMAEYRGITVADMTKLRSTARSNGVSLSVLKNTLARRAVTGSGFEIVSDLMTGPLIYGFSEDAVAAARVVADFAKTNVKLVIRGGAYGGKALDVNGVKQLASIPSKEVLLAQLLGLMQSPISRTARVLAAIAEKKGAGVADAPVEAAAEAVAA</sequence>